<comment type="alternative products">
    <event type="alternative splicing"/>
    <isoform>
        <id>A6NHP3-1</id>
        <name>1</name>
        <sequence type="displayed"/>
    </isoform>
    <isoform>
        <id>A6NHP3-2</id>
        <name>2</name>
        <sequence type="described" ref="VSP_039852"/>
    </isoform>
</comment>
<comment type="similarity">
    <text evidence="2">Belongs to the Speedy/Ringo family.</text>
</comment>
<gene>
    <name type="primary">SPDYE2B</name>
</gene>
<keyword id="KW-0025">Alternative splicing</keyword>
<keyword id="KW-1185">Reference proteome</keyword>
<feature type="chain" id="PRO_0000399479" description="Speedy protein E2B">
    <location>
        <begin position="1"/>
        <end position="402"/>
    </location>
</feature>
<feature type="region of interest" description="Disordered" evidence="1">
    <location>
        <begin position="1"/>
        <end position="89"/>
    </location>
</feature>
<feature type="compositionally biased region" description="Polar residues" evidence="1">
    <location>
        <begin position="16"/>
        <end position="39"/>
    </location>
</feature>
<feature type="compositionally biased region" description="Acidic residues" evidence="1">
    <location>
        <begin position="76"/>
        <end position="89"/>
    </location>
</feature>
<feature type="splice variant" id="VSP_039852" description="In isoform 2." evidence="2">
    <location>
        <begin position="1"/>
        <end position="144"/>
    </location>
</feature>
<name>SPE2B_HUMAN</name>
<protein>
    <recommendedName>
        <fullName>Speedy protein E2B</fullName>
    </recommendedName>
</protein>
<proteinExistence type="inferred from homology"/>
<evidence type="ECO:0000256" key="1">
    <source>
        <dbReference type="SAM" id="MobiDB-lite"/>
    </source>
</evidence>
<evidence type="ECO:0000305" key="2"/>
<organism>
    <name type="scientific">Homo sapiens</name>
    <name type="common">Human</name>
    <dbReference type="NCBI Taxonomy" id="9606"/>
    <lineage>
        <taxon>Eukaryota</taxon>
        <taxon>Metazoa</taxon>
        <taxon>Chordata</taxon>
        <taxon>Craniata</taxon>
        <taxon>Vertebrata</taxon>
        <taxon>Euteleostomi</taxon>
        <taxon>Mammalia</taxon>
        <taxon>Eutheria</taxon>
        <taxon>Euarchontoglires</taxon>
        <taxon>Primates</taxon>
        <taxon>Haplorrhini</taxon>
        <taxon>Catarrhini</taxon>
        <taxon>Hominidae</taxon>
        <taxon>Homo</taxon>
    </lineage>
</organism>
<sequence>MDRTETRFRKRGQITGKITTSRQPHPQNEQSPQRSTSGYPLQEVVDDEMLGPSAPGVDPSPPCRSLGWKRKREWSDESEEEPEKELAPEPEETWVVEMLCGLKMKLKQQRVSSILPEHHKDFNSQLAPGVDPSPPHRSFCWKRKMEWWDESEESLEEEPRKVLAPEPEEIWVAEMLCGLKMKLKRRRVSLVLPEHHEAFNRLLEDPVIKRFLAWDKDLRVSDKYLLAMVIAYFSRAGFPSWQYQRIHFFLALYLANDMEEDDEDSKQNIFHFLYRKNRSRIPLLRKPWFQLGHSMNPRARKNRSRIPLLRKRRFQLYRSTNPRARKNRSRIPLLRKRRFQLYRSMNSRARKNRSQIVLFQKRRFHFFCSMSCRAWVSPEELEEIQAYDPEHWVWARDRAHLS</sequence>
<reference key="1">
    <citation type="journal article" date="2003" name="Nature">
        <title>The DNA sequence of human chromosome 7.</title>
        <authorList>
            <person name="Hillier L.W."/>
            <person name="Fulton R.S."/>
            <person name="Fulton L.A."/>
            <person name="Graves T.A."/>
            <person name="Pepin K.H."/>
            <person name="Wagner-McPherson C."/>
            <person name="Layman D."/>
            <person name="Maas J."/>
            <person name="Jaeger S."/>
            <person name="Walker R."/>
            <person name="Wylie K."/>
            <person name="Sekhon M."/>
            <person name="Becker M.C."/>
            <person name="O'Laughlin M.D."/>
            <person name="Schaller M.E."/>
            <person name="Fewell G.A."/>
            <person name="Delehaunty K.D."/>
            <person name="Miner T.L."/>
            <person name="Nash W.E."/>
            <person name="Cordes M."/>
            <person name="Du H."/>
            <person name="Sun H."/>
            <person name="Edwards J."/>
            <person name="Bradshaw-Cordum H."/>
            <person name="Ali J."/>
            <person name="Andrews S."/>
            <person name="Isak A."/>
            <person name="Vanbrunt A."/>
            <person name="Nguyen C."/>
            <person name="Du F."/>
            <person name="Lamar B."/>
            <person name="Courtney L."/>
            <person name="Kalicki J."/>
            <person name="Ozersky P."/>
            <person name="Bielicki L."/>
            <person name="Scott K."/>
            <person name="Holmes A."/>
            <person name="Harkins R."/>
            <person name="Harris A."/>
            <person name="Strong C.M."/>
            <person name="Hou S."/>
            <person name="Tomlinson C."/>
            <person name="Dauphin-Kohlberg S."/>
            <person name="Kozlowicz-Reilly A."/>
            <person name="Leonard S."/>
            <person name="Rohlfing T."/>
            <person name="Rock S.M."/>
            <person name="Tin-Wollam A.-M."/>
            <person name="Abbott A."/>
            <person name="Minx P."/>
            <person name="Maupin R."/>
            <person name="Strowmatt C."/>
            <person name="Latreille P."/>
            <person name="Miller N."/>
            <person name="Johnson D."/>
            <person name="Murray J."/>
            <person name="Woessner J.P."/>
            <person name="Wendl M.C."/>
            <person name="Yang S.-P."/>
            <person name="Schultz B.R."/>
            <person name="Wallis J.W."/>
            <person name="Spieth J."/>
            <person name="Bieri T.A."/>
            <person name="Nelson J.O."/>
            <person name="Berkowicz N."/>
            <person name="Wohldmann P.E."/>
            <person name="Cook L.L."/>
            <person name="Hickenbotham M.T."/>
            <person name="Eldred J."/>
            <person name="Williams D."/>
            <person name="Bedell J.A."/>
            <person name="Mardis E.R."/>
            <person name="Clifton S.W."/>
            <person name="Chissoe S.L."/>
            <person name="Marra M.A."/>
            <person name="Raymond C."/>
            <person name="Haugen E."/>
            <person name="Gillett W."/>
            <person name="Zhou Y."/>
            <person name="James R."/>
            <person name="Phelps K."/>
            <person name="Iadanoto S."/>
            <person name="Bubb K."/>
            <person name="Simms E."/>
            <person name="Levy R."/>
            <person name="Clendenning J."/>
            <person name="Kaul R."/>
            <person name="Kent W.J."/>
            <person name="Furey T.S."/>
            <person name="Baertsch R.A."/>
            <person name="Brent M.R."/>
            <person name="Keibler E."/>
            <person name="Flicek P."/>
            <person name="Bork P."/>
            <person name="Suyama M."/>
            <person name="Bailey J.A."/>
            <person name="Portnoy M.E."/>
            <person name="Torrents D."/>
            <person name="Chinwalla A.T."/>
            <person name="Gish W.R."/>
            <person name="Eddy S.R."/>
            <person name="McPherson J.D."/>
            <person name="Olson M.V."/>
            <person name="Eichler E.E."/>
            <person name="Green E.D."/>
            <person name="Waterston R.H."/>
            <person name="Wilson R.K."/>
        </authorList>
    </citation>
    <scope>NUCLEOTIDE SEQUENCE [LARGE SCALE GENOMIC DNA]</scope>
</reference>
<dbReference type="EMBL" id="AC105052">
    <property type="status" value="NOT_ANNOTATED_CDS"/>
    <property type="molecule type" value="Genomic_DNA"/>
</dbReference>
<dbReference type="CCDS" id="CCDS59507.1">
    <molecule id="A6NHP3-1"/>
</dbReference>
<dbReference type="RefSeq" id="NP_001159811.1">
    <molecule id="A6NHP3-1"/>
    <property type="nucleotide sequence ID" value="NM_001166339.2"/>
</dbReference>
<dbReference type="RefSeq" id="XP_005250150.1">
    <property type="nucleotide sequence ID" value="XM_005250093.3"/>
</dbReference>
<dbReference type="SMR" id="A6NHP3"/>
<dbReference type="BioGRID" id="138451">
    <property type="interactions" value="5"/>
</dbReference>
<dbReference type="FunCoup" id="A6NHP3">
    <property type="interactions" value="158"/>
</dbReference>
<dbReference type="IntAct" id="A6NHP3">
    <property type="interactions" value="1"/>
</dbReference>
<dbReference type="STRING" id="9606.ENSP00000424058"/>
<dbReference type="iPTMnet" id="A6NHP3"/>
<dbReference type="PhosphoSitePlus" id="A6NHP3"/>
<dbReference type="BioMuta" id="SPDYE2B"/>
<dbReference type="MassIVE" id="A6NHP3"/>
<dbReference type="PaxDb" id="9606-ENSP00000424058"/>
<dbReference type="PeptideAtlas" id="A6NHP3"/>
<dbReference type="Antibodypedia" id="74842">
    <property type="antibodies" value="33 antibodies from 9 providers"/>
</dbReference>
<dbReference type="DNASU" id="100310812"/>
<dbReference type="Ensembl" id="ENST00000436228.6">
    <molecule id="A6NHP3-1"/>
    <property type="protein sequence ID" value="ENSP00000440393.1"/>
    <property type="gene ID" value="ENSG00000173678.15"/>
</dbReference>
<dbReference type="Ensembl" id="ENST00000455020.3">
    <molecule id="A6NHP3-2"/>
    <property type="protein sequence ID" value="ENSP00000414338.2"/>
    <property type="gene ID" value="ENSG00000173678.15"/>
</dbReference>
<dbReference type="Ensembl" id="ENST00000507450.6">
    <molecule id="A6NHP3-1"/>
    <property type="protein sequence ID" value="ENSP00000424058.1"/>
    <property type="gene ID" value="ENSG00000173678.15"/>
</dbReference>
<dbReference type="GeneID" id="100310812"/>
<dbReference type="KEGG" id="hsa:100310812"/>
<dbReference type="MANE-Select" id="ENST00000507450.6">
    <property type="protein sequence ID" value="ENSP00000424058.1"/>
    <property type="RefSeq nucleotide sequence ID" value="NM_001166339.2"/>
    <property type="RefSeq protein sequence ID" value="NP_001159811.1"/>
</dbReference>
<dbReference type="UCSC" id="uc011kle.3">
    <molecule id="A6NHP3-1"/>
    <property type="organism name" value="human"/>
</dbReference>
<dbReference type="AGR" id="HGNC:48334"/>
<dbReference type="CTD" id="100310812"/>
<dbReference type="GeneCards" id="SPDYE2B"/>
<dbReference type="HGNC" id="HGNC:48334">
    <property type="gene designation" value="SPDYE2B"/>
</dbReference>
<dbReference type="HPA" id="ENSG00000173678">
    <property type="expression patterns" value="Tissue enhanced (skeletal muscle, testis)"/>
</dbReference>
<dbReference type="neXtProt" id="NX_A6NHP3"/>
<dbReference type="OpenTargets" id="ENSG00000205238"/>
<dbReference type="VEuPathDB" id="HostDB:ENSG00000173678"/>
<dbReference type="eggNOG" id="ENOG502SSQN">
    <property type="taxonomic scope" value="Eukaryota"/>
</dbReference>
<dbReference type="GeneTree" id="ENSGT00940000154173"/>
<dbReference type="HOGENOM" id="CLU_070353_0_0_1"/>
<dbReference type="InParanoid" id="A6NHP3"/>
<dbReference type="OMA" id="EAFNSYD"/>
<dbReference type="PAN-GO" id="A6NHP3">
    <property type="GO annotations" value="1 GO annotation based on evolutionary models"/>
</dbReference>
<dbReference type="PhylomeDB" id="A6NHP3"/>
<dbReference type="BioGRID-ORCS" id="100310812">
    <property type="hits" value="43 hits in 664 CRISPR screens"/>
</dbReference>
<dbReference type="GenomeRNAi" id="100310812"/>
<dbReference type="Pharos" id="A6NHP3">
    <property type="development level" value="Tdark"/>
</dbReference>
<dbReference type="PRO" id="PR:A6NHP3"/>
<dbReference type="Proteomes" id="UP000005640">
    <property type="component" value="Chromosome 7"/>
</dbReference>
<dbReference type="RNAct" id="A6NHP3">
    <property type="molecule type" value="protein"/>
</dbReference>
<dbReference type="Bgee" id="ENSG00000173678">
    <property type="expression patterns" value="Expressed in male germ line stem cell (sensu Vertebrata) in testis and 103 other cell types or tissues"/>
</dbReference>
<dbReference type="GO" id="GO:0019901">
    <property type="term" value="F:protein kinase binding"/>
    <property type="evidence" value="ECO:0000318"/>
    <property type="project" value="GO_Central"/>
</dbReference>
<dbReference type="InterPro" id="IPR020984">
    <property type="entry name" value="Speedy"/>
</dbReference>
<dbReference type="PANTHER" id="PTHR31156">
    <property type="entry name" value="WBSCR19-LIKE PROTEIN"/>
    <property type="match status" value="1"/>
</dbReference>
<dbReference type="Pfam" id="PF11357">
    <property type="entry name" value="Spy1"/>
    <property type="match status" value="2"/>
</dbReference>
<accession>A6NHP3</accession>
<accession>D6RBN0</accession>